<dbReference type="EMBL" id="CP000505">
    <property type="protein sequence ID" value="ABL77647.1"/>
    <property type="molecule type" value="Genomic_DNA"/>
</dbReference>
<dbReference type="RefSeq" id="WP_011751912.1">
    <property type="nucleotide sequence ID" value="NC_008698.1"/>
</dbReference>
<dbReference type="SMR" id="A1RWR7"/>
<dbReference type="STRING" id="368408.Tpen_0237"/>
<dbReference type="EnsemblBacteria" id="ABL77647">
    <property type="protein sequence ID" value="ABL77647"/>
    <property type="gene ID" value="Tpen_0237"/>
</dbReference>
<dbReference type="GeneID" id="4600707"/>
<dbReference type="KEGG" id="tpe:Tpen_0237"/>
<dbReference type="eggNOG" id="arCOG04088">
    <property type="taxonomic scope" value="Archaea"/>
</dbReference>
<dbReference type="HOGENOM" id="CLU_056222_2_0_2"/>
<dbReference type="OrthoDB" id="8644at2157"/>
<dbReference type="Proteomes" id="UP000000641">
    <property type="component" value="Chromosome"/>
</dbReference>
<dbReference type="GO" id="GO:0022625">
    <property type="term" value="C:cytosolic large ribosomal subunit"/>
    <property type="evidence" value="ECO:0007669"/>
    <property type="project" value="TreeGrafter"/>
</dbReference>
<dbReference type="GO" id="GO:0008097">
    <property type="term" value="F:5S rRNA binding"/>
    <property type="evidence" value="ECO:0007669"/>
    <property type="project" value="InterPro"/>
</dbReference>
<dbReference type="GO" id="GO:0003735">
    <property type="term" value="F:structural constituent of ribosome"/>
    <property type="evidence" value="ECO:0007669"/>
    <property type="project" value="InterPro"/>
</dbReference>
<dbReference type="GO" id="GO:0000027">
    <property type="term" value="P:ribosomal large subunit assembly"/>
    <property type="evidence" value="ECO:0007669"/>
    <property type="project" value="TreeGrafter"/>
</dbReference>
<dbReference type="GO" id="GO:0006412">
    <property type="term" value="P:translation"/>
    <property type="evidence" value="ECO:0007669"/>
    <property type="project" value="UniProtKB-UniRule"/>
</dbReference>
<dbReference type="CDD" id="cd00432">
    <property type="entry name" value="Ribosomal_L18_L5e"/>
    <property type="match status" value="1"/>
</dbReference>
<dbReference type="Gene3D" id="3.30.420.100">
    <property type="match status" value="1"/>
</dbReference>
<dbReference type="HAMAP" id="MF_01337_A">
    <property type="entry name" value="Ribosomal_uL18_A"/>
    <property type="match status" value="1"/>
</dbReference>
<dbReference type="InterPro" id="IPR005485">
    <property type="entry name" value="Rbsml_uL18_euk"/>
</dbReference>
<dbReference type="NCBIfam" id="NF006342">
    <property type="entry name" value="PRK08569.1"/>
    <property type="match status" value="1"/>
</dbReference>
<dbReference type="PANTHER" id="PTHR23410:SF12">
    <property type="entry name" value="LARGE RIBOSOMAL SUBUNIT PROTEIN UL18"/>
    <property type="match status" value="1"/>
</dbReference>
<dbReference type="PANTHER" id="PTHR23410">
    <property type="entry name" value="RIBOSOMAL PROTEIN L5-RELATED"/>
    <property type="match status" value="1"/>
</dbReference>
<dbReference type="Pfam" id="PF17144">
    <property type="entry name" value="Ribosomal_L5e"/>
    <property type="match status" value="2"/>
</dbReference>
<dbReference type="SUPFAM" id="SSF53137">
    <property type="entry name" value="Translational machinery components"/>
    <property type="match status" value="1"/>
</dbReference>
<reference key="1">
    <citation type="journal article" date="2008" name="J. Bacteriol.">
        <title>Genome sequence of Thermofilum pendens reveals an exceptional loss of biosynthetic pathways without genome reduction.</title>
        <authorList>
            <person name="Anderson I."/>
            <person name="Rodriguez J."/>
            <person name="Susanti D."/>
            <person name="Porat I."/>
            <person name="Reich C."/>
            <person name="Ulrich L.E."/>
            <person name="Elkins J.G."/>
            <person name="Mavromatis K."/>
            <person name="Lykidis A."/>
            <person name="Kim E."/>
            <person name="Thompson L.S."/>
            <person name="Nolan M."/>
            <person name="Land M."/>
            <person name="Copeland A."/>
            <person name="Lapidus A."/>
            <person name="Lucas S."/>
            <person name="Detter C."/>
            <person name="Zhulin I.B."/>
            <person name="Olsen G.J."/>
            <person name="Whitman W."/>
            <person name="Mukhopadhyay B."/>
            <person name="Bristow J."/>
            <person name="Kyrpides N."/>
        </authorList>
    </citation>
    <scope>NUCLEOTIDE SEQUENCE [LARGE SCALE GENOMIC DNA]</scope>
    <source>
        <strain>DSM 2475 / Hrk 5</strain>
    </source>
</reference>
<feature type="chain" id="PRO_1000053133" description="Large ribosomal subunit protein uL18">
    <location>
        <begin position="1"/>
        <end position="196"/>
    </location>
</feature>
<accession>A1RWR7</accession>
<gene>
    <name evidence="1" type="primary">rpl18</name>
    <name type="ordered locus">Tpen_0237</name>
</gene>
<keyword id="KW-1185">Reference proteome</keyword>
<keyword id="KW-0687">Ribonucleoprotein</keyword>
<keyword id="KW-0689">Ribosomal protein</keyword>
<keyword id="KW-0694">RNA-binding</keyword>
<keyword id="KW-0699">rRNA-binding</keyword>
<evidence type="ECO:0000255" key="1">
    <source>
        <dbReference type="HAMAP-Rule" id="MF_01337"/>
    </source>
</evidence>
<evidence type="ECO:0000305" key="2"/>
<organism>
    <name type="scientific">Thermofilum pendens (strain DSM 2475 / Hrk 5)</name>
    <dbReference type="NCBI Taxonomy" id="368408"/>
    <lineage>
        <taxon>Archaea</taxon>
        <taxon>Thermoproteota</taxon>
        <taxon>Thermoprotei</taxon>
        <taxon>Thermofilales</taxon>
        <taxon>Thermofilaceae</taxon>
        <taxon>Thermofilum</taxon>
    </lineage>
</organism>
<name>RL18_THEPD</name>
<proteinExistence type="inferred from homology"/>
<protein>
    <recommendedName>
        <fullName evidence="1">Large ribosomal subunit protein uL18</fullName>
    </recommendedName>
    <alternativeName>
        <fullName evidence="2">50S ribosomal protein L18</fullName>
    </alternativeName>
</protein>
<comment type="function">
    <text evidence="1">This is one of the proteins that bind and probably mediate the attachment of the 5S RNA into the large ribosomal subunit, where it forms part of the central protuberance.</text>
</comment>
<comment type="subunit">
    <text evidence="1">Part of the 50S ribosomal subunit. Contacts the 5S and 23S rRNAs.</text>
</comment>
<comment type="similarity">
    <text evidence="1">Belongs to the universal ribosomal protein uL18 family.</text>
</comment>
<sequence>MARGARYRVPLKRRREGKTNYYKRRKLIISGKPRLVVRVLSRTAIVQIAKATPKGDVVIASAHSNELKKYGWKGYRRNTPALYLLGFLAAKKALKQGVTEAIVDIGLHRPVKASRVFAAVKGALDAGLKIPVGDGVLPEDDRVRGEHIANYAKMLKESNPELFKLRFSGYLSAGLDPESLPEHFDSVKQKIEEALQ</sequence>